<sequence>MTTSSSGSVETSANSRPGTFSFASASFTDLLGGNAGAGGGGVSRYKAMTPPSLPLSPPPVSPSSFFNSPIGMNQADFLGSPVLLTSSIFPSPTTGAFASQHFDWRPEVAAAQSADQGGKDEQRNSYSDFSFQTAPASEEAARTTTFQPPVPPALLGDEAYRSQQQQQPWGYQQQPAGMDAGANAASFGAAPFQATSSEMAPQVQGGGGYSQPQSQRRSSDDGYNWRKYGQKQVKGSENPRSYYKCTFPNCPTKKKVERSLDGQITEIVYKGTHNHAKPQNTRRNSGSSAAQVLQSGGDMSEHSFGGMSGTAATPENSSASFGDDEIGVGSPRAGNGGGDEFDDDEPDSKRWRKDGDGEGISMAGNRTVREPRVVVQTMSDIDILDDGYRWRKYGQKVVKGNPNPRSYYKCTTAGCPVRKHVERASHDLRAVITTYEGKHNHDVPAARGSAALYRPAPPAAAATSSHPYLPNQPPPMSYQPTGPQPYALRPDGFGGQGPFGGVVGGSSFGGLSGFDDARGSYMSQHQQQQRQNDAMHASRAKEEPGDDMFFQNSLY</sequence>
<gene>
    <name evidence="8" type="primary">WRKY24</name>
    <name evidence="10" type="ORF">OsI_04274</name>
</gene>
<comment type="function">
    <text evidence="1 2">Transcription repressor (By similarity). Interacts specifically with the W box (5'-(T)TGAC[CT]-3'), a frequently occurring elicitor-responsive cis-acting element. Negative regulator of both gibberellic acid (GA) and abscisic acid (ABA) signaling in aleurone cells, probably by interfering with GAM1, via the specific repression of GA- and ABA-induced promoters (By similarity).</text>
</comment>
<comment type="subcellular location">
    <subcellularLocation>
        <location evidence="2 4">Nucleus</location>
    </subcellularLocation>
</comment>
<comment type="tissue specificity">
    <text evidence="1">Expressed in aleurone cells. Mostly expressed in aleurone layers and leaves, and, to a lower extent, in roots, panicles and embryos.</text>
</comment>
<comment type="developmental stage">
    <text evidence="1">In dry seeds, expressed in aleurone cells and embryos. Levels drop rapidly but transiently in the embryos of imbibed seeds.</text>
</comment>
<comment type="induction">
    <text evidence="1 6 7">Induced by abscisic acid (ABA) in aleurone cells, embryos, roots and leaves (PubMed:25110688). Slightly down-regulated by gibberellic acid (GA) (By similarity). Accumulates in response to jasmonic acid (MeJA) (PubMed:16919842).</text>
</comment>
<comment type="domain">
    <text evidence="2">The WRKY domain is required to bind DNA.</text>
</comment>
<comment type="similarity">
    <text evidence="9">Belongs to the WRKY group II-a family.</text>
</comment>
<proteinExistence type="evidence at transcript level"/>
<protein>
    <recommendedName>
        <fullName evidence="8">WRKY transcription factor WRKY24</fullName>
        <shortName evidence="8">OsWRKY24</shortName>
    </recommendedName>
</protein>
<keyword id="KW-0938">Abscisic acid signaling pathway</keyword>
<keyword id="KW-0010">Activator</keyword>
<keyword id="KW-0238">DNA-binding</keyword>
<keyword id="KW-0939">Gibberellin signaling pathway</keyword>
<keyword id="KW-0539">Nucleus</keyword>
<keyword id="KW-1185">Reference proteome</keyword>
<keyword id="KW-0677">Repeat</keyword>
<keyword id="KW-0804">Transcription</keyword>
<keyword id="KW-0805">Transcription regulation</keyword>
<reference key="1">
    <citation type="journal article" date="2007" name="J. Plant Physiol.">
        <title>OsWRKY71, a rice transcription factor, is involved in rice defense response.</title>
        <authorList>
            <person name="Liu X."/>
            <person name="Bai X."/>
            <person name="Wang X."/>
            <person name="Chu C."/>
        </authorList>
    </citation>
    <scope>NUCLEOTIDE SEQUENCE [MRNA]</scope>
    <scope>INDUCTION BY JASMONIC ACID</scope>
    <source>
        <strain>cv. Guang-Lu-Ai No.4</strain>
        <tissue>Leaf</tissue>
    </source>
</reference>
<reference key="2">
    <citation type="journal article" date="2005" name="PLoS Biol.">
        <title>The genomes of Oryza sativa: a history of duplications.</title>
        <authorList>
            <person name="Yu J."/>
            <person name="Wang J."/>
            <person name="Lin W."/>
            <person name="Li S."/>
            <person name="Li H."/>
            <person name="Zhou J."/>
            <person name="Ni P."/>
            <person name="Dong W."/>
            <person name="Hu S."/>
            <person name="Zeng C."/>
            <person name="Zhang J."/>
            <person name="Zhang Y."/>
            <person name="Li R."/>
            <person name="Xu Z."/>
            <person name="Li S."/>
            <person name="Li X."/>
            <person name="Zheng H."/>
            <person name="Cong L."/>
            <person name="Lin L."/>
            <person name="Yin J."/>
            <person name="Geng J."/>
            <person name="Li G."/>
            <person name="Shi J."/>
            <person name="Liu J."/>
            <person name="Lv H."/>
            <person name="Li J."/>
            <person name="Wang J."/>
            <person name="Deng Y."/>
            <person name="Ran L."/>
            <person name="Shi X."/>
            <person name="Wang X."/>
            <person name="Wu Q."/>
            <person name="Li C."/>
            <person name="Ren X."/>
            <person name="Wang J."/>
            <person name="Wang X."/>
            <person name="Li D."/>
            <person name="Liu D."/>
            <person name="Zhang X."/>
            <person name="Ji Z."/>
            <person name="Zhao W."/>
            <person name="Sun Y."/>
            <person name="Zhang Z."/>
            <person name="Bao J."/>
            <person name="Han Y."/>
            <person name="Dong L."/>
            <person name="Ji J."/>
            <person name="Chen P."/>
            <person name="Wu S."/>
            <person name="Liu J."/>
            <person name="Xiao Y."/>
            <person name="Bu D."/>
            <person name="Tan J."/>
            <person name="Yang L."/>
            <person name="Ye C."/>
            <person name="Zhang J."/>
            <person name="Xu J."/>
            <person name="Zhou Y."/>
            <person name="Yu Y."/>
            <person name="Zhang B."/>
            <person name="Zhuang S."/>
            <person name="Wei H."/>
            <person name="Liu B."/>
            <person name="Lei M."/>
            <person name="Yu H."/>
            <person name="Li Y."/>
            <person name="Xu H."/>
            <person name="Wei S."/>
            <person name="He X."/>
            <person name="Fang L."/>
            <person name="Zhang Z."/>
            <person name="Zhang Y."/>
            <person name="Huang X."/>
            <person name="Su Z."/>
            <person name="Tong W."/>
            <person name="Li J."/>
            <person name="Tong Z."/>
            <person name="Li S."/>
            <person name="Ye J."/>
            <person name="Wang L."/>
            <person name="Fang L."/>
            <person name="Lei T."/>
            <person name="Chen C.-S."/>
            <person name="Chen H.-C."/>
            <person name="Xu Z."/>
            <person name="Li H."/>
            <person name="Huang H."/>
            <person name="Zhang F."/>
            <person name="Xu H."/>
            <person name="Li N."/>
            <person name="Zhao C."/>
            <person name="Li S."/>
            <person name="Dong L."/>
            <person name="Huang Y."/>
            <person name="Li L."/>
            <person name="Xi Y."/>
            <person name="Qi Q."/>
            <person name="Li W."/>
            <person name="Zhang B."/>
            <person name="Hu W."/>
            <person name="Zhang Y."/>
            <person name="Tian X."/>
            <person name="Jiao Y."/>
            <person name="Liang X."/>
            <person name="Jin J."/>
            <person name="Gao L."/>
            <person name="Zheng W."/>
            <person name="Hao B."/>
            <person name="Liu S.-M."/>
            <person name="Wang W."/>
            <person name="Yuan L."/>
            <person name="Cao M."/>
            <person name="McDermott J."/>
            <person name="Samudrala R."/>
            <person name="Wang J."/>
            <person name="Wong G.K.-S."/>
            <person name="Yang H."/>
        </authorList>
    </citation>
    <scope>NUCLEOTIDE SEQUENCE [LARGE SCALE GENOMIC DNA]</scope>
    <source>
        <strain>cv. 93-11</strain>
    </source>
</reference>
<reference key="3">
    <citation type="journal article" date="2014" name="Biomed. Res. Int.">
        <title>Expression profiling of abiotic stress-inducible genes in response to multiple stresses in rice (Oryza sativa L.) varieties with contrasting level of stress tolerance.</title>
        <authorList>
            <person name="Basu S."/>
            <person name="Roychoudhury A."/>
        </authorList>
    </citation>
    <scope>INDUCTION BY ABA</scope>
    <source>
        <strain>cv. IR29</strain>
        <strain>cv. Pokkali</strain>
    </source>
</reference>
<evidence type="ECO:0000250" key="1">
    <source>
        <dbReference type="UniProtKB" id="Q6IEQ7"/>
    </source>
</evidence>
<evidence type="ECO:0000250" key="2">
    <source>
        <dbReference type="UniProtKB" id="Q6QHD1"/>
    </source>
</evidence>
<evidence type="ECO:0000255" key="3"/>
<evidence type="ECO:0000255" key="4">
    <source>
        <dbReference type="PROSITE-ProRule" id="PRU00223"/>
    </source>
</evidence>
<evidence type="ECO:0000256" key="5">
    <source>
        <dbReference type="SAM" id="MobiDB-lite"/>
    </source>
</evidence>
<evidence type="ECO:0000269" key="6">
    <source>
    </source>
</evidence>
<evidence type="ECO:0000269" key="7">
    <source>
    </source>
</evidence>
<evidence type="ECO:0000303" key="8">
    <source>
    </source>
</evidence>
<evidence type="ECO:0000305" key="9"/>
<evidence type="ECO:0000312" key="10">
    <source>
        <dbReference type="EMBL" id="EAY76340.1"/>
    </source>
</evidence>
<feature type="chain" id="PRO_0000436951" description="WRKY transcription factor WRKY24">
    <location>
        <begin position="1"/>
        <end position="555"/>
    </location>
</feature>
<feature type="DNA-binding region" description="WRKY 1" evidence="4">
    <location>
        <begin position="214"/>
        <end position="278"/>
    </location>
</feature>
<feature type="DNA-binding region" description="WRKY 2" evidence="4">
    <location>
        <begin position="379"/>
        <end position="444"/>
    </location>
</feature>
<feature type="region of interest" description="Disordered" evidence="5">
    <location>
        <begin position="38"/>
        <end position="65"/>
    </location>
</feature>
<feature type="region of interest" description="Disordered" evidence="5">
    <location>
        <begin position="132"/>
        <end position="248"/>
    </location>
</feature>
<feature type="region of interest" description="Disordered" evidence="5">
    <location>
        <begin position="270"/>
        <end position="367"/>
    </location>
</feature>
<feature type="region of interest" description="Transcription repression of gibberellic acid (GA)-induced promoters" evidence="2">
    <location>
        <begin position="466"/>
        <end position="555"/>
    </location>
</feature>
<feature type="region of interest" description="Disordered" evidence="5">
    <location>
        <begin position="471"/>
        <end position="498"/>
    </location>
</feature>
<feature type="region of interest" description="Disordered" evidence="5">
    <location>
        <begin position="513"/>
        <end position="555"/>
    </location>
</feature>
<feature type="short sequence motif" description="Nuclear localization signal" evidence="3">
    <location>
        <begin position="253"/>
        <end position="259"/>
    </location>
</feature>
<feature type="compositionally biased region" description="Pro residues" evidence="5">
    <location>
        <begin position="51"/>
        <end position="61"/>
    </location>
</feature>
<feature type="compositionally biased region" description="Low complexity" evidence="5">
    <location>
        <begin position="163"/>
        <end position="194"/>
    </location>
</feature>
<feature type="compositionally biased region" description="Polar residues" evidence="5">
    <location>
        <begin position="277"/>
        <end position="294"/>
    </location>
</feature>
<feature type="compositionally biased region" description="Polar residues" evidence="5">
    <location>
        <begin position="310"/>
        <end position="320"/>
    </location>
</feature>
<feature type="compositionally biased region" description="Basic and acidic residues" evidence="5">
    <location>
        <begin position="347"/>
        <end position="356"/>
    </location>
</feature>
<dbReference type="EMBL" id="AY676925">
    <property type="protein sequence ID" value="AAT84156.1"/>
    <property type="molecule type" value="mRNA"/>
</dbReference>
<dbReference type="EMBL" id="CM000126">
    <property type="protein sequence ID" value="EAY76340.1"/>
    <property type="molecule type" value="Genomic_DNA"/>
</dbReference>
<dbReference type="SMR" id="Q6B6R4"/>
<dbReference type="STRING" id="39946.Q6B6R4"/>
<dbReference type="EnsemblPlants" id="BGIOSGA004722-TA">
    <property type="protein sequence ID" value="BGIOSGA004722-PA"/>
    <property type="gene ID" value="BGIOSGA004722"/>
</dbReference>
<dbReference type="EnsemblPlants" id="OsGoSa_01g0037870.01">
    <property type="protein sequence ID" value="OsGoSa_01g0037870.01"/>
    <property type="gene ID" value="OsGoSa_01g0037870"/>
</dbReference>
<dbReference type="EnsemblPlants" id="OsIR64_01g0037380.01">
    <property type="protein sequence ID" value="OsIR64_01g0037380.01"/>
    <property type="gene ID" value="OsIR64_01g0037380"/>
</dbReference>
<dbReference type="EnsemblPlants" id="OsKYG_01g0037640.01">
    <property type="protein sequence ID" value="OsKYG_01g0037640.01"/>
    <property type="gene ID" value="OsKYG_01g0037640"/>
</dbReference>
<dbReference type="EnsemblPlants" id="OsLaMu_01g0037720.01">
    <property type="protein sequence ID" value="OsLaMu_01g0037720.01"/>
    <property type="gene ID" value="OsLaMu_01g0037720"/>
</dbReference>
<dbReference type="EnsemblPlants" id="OsLiXu_01g0037890.01">
    <property type="protein sequence ID" value="OsLiXu_01g0037890.01"/>
    <property type="gene ID" value="OsLiXu_01g0037890"/>
</dbReference>
<dbReference type="EnsemblPlants" id="OsMH63_01G038460_01">
    <property type="protein sequence ID" value="OsMH63_01G038460_01"/>
    <property type="gene ID" value="OsMH63_01G038460"/>
</dbReference>
<dbReference type="EnsemblPlants" id="OsPr106_01g0037680.01">
    <property type="protein sequence ID" value="OsPr106_01g0037680.01"/>
    <property type="gene ID" value="OsPr106_01g0037680"/>
</dbReference>
<dbReference type="Gramene" id="BGIOSGA004722-TA">
    <property type="protein sequence ID" value="BGIOSGA004722-PA"/>
    <property type="gene ID" value="BGIOSGA004722"/>
</dbReference>
<dbReference type="Gramene" id="OsGoSa_01g0037870.01">
    <property type="protein sequence ID" value="OsGoSa_01g0037870.01"/>
    <property type="gene ID" value="OsGoSa_01g0037870"/>
</dbReference>
<dbReference type="Gramene" id="OsIR64_01g0037380.01">
    <property type="protein sequence ID" value="OsIR64_01g0037380.01"/>
    <property type="gene ID" value="OsIR64_01g0037380"/>
</dbReference>
<dbReference type="Gramene" id="OsKYG_01g0037640.01">
    <property type="protein sequence ID" value="OsKYG_01g0037640.01"/>
    <property type="gene ID" value="OsKYG_01g0037640"/>
</dbReference>
<dbReference type="Gramene" id="OsLaMu_01g0037720.01">
    <property type="protein sequence ID" value="OsLaMu_01g0037720.01"/>
    <property type="gene ID" value="OsLaMu_01g0037720"/>
</dbReference>
<dbReference type="Gramene" id="OsLiXu_01g0037890.01">
    <property type="protein sequence ID" value="OsLiXu_01g0037890.01"/>
    <property type="gene ID" value="OsLiXu_01g0037890"/>
</dbReference>
<dbReference type="Gramene" id="OsMH63_01G038460_01">
    <property type="protein sequence ID" value="OsMH63_01G038460_01"/>
    <property type="gene ID" value="OsMH63_01G038460"/>
</dbReference>
<dbReference type="Gramene" id="OsPr106_01g0037680.01">
    <property type="protein sequence ID" value="OsPr106_01g0037680.01"/>
    <property type="gene ID" value="OsPr106_01g0037680"/>
</dbReference>
<dbReference type="HOGENOM" id="CLU_012086_5_0_1"/>
<dbReference type="OMA" id="REDMFFP"/>
<dbReference type="OrthoDB" id="5065855at2759"/>
<dbReference type="Proteomes" id="UP000007015">
    <property type="component" value="Chromosome 1"/>
</dbReference>
<dbReference type="GO" id="GO:0005634">
    <property type="term" value="C:nucleus"/>
    <property type="evidence" value="ECO:0007669"/>
    <property type="project" value="UniProtKB-SubCell"/>
</dbReference>
<dbReference type="GO" id="GO:0003700">
    <property type="term" value="F:DNA-binding transcription factor activity"/>
    <property type="evidence" value="ECO:0007669"/>
    <property type="project" value="InterPro"/>
</dbReference>
<dbReference type="GO" id="GO:0043565">
    <property type="term" value="F:sequence-specific DNA binding"/>
    <property type="evidence" value="ECO:0007669"/>
    <property type="project" value="InterPro"/>
</dbReference>
<dbReference type="GO" id="GO:0009738">
    <property type="term" value="P:abscisic acid-activated signaling pathway"/>
    <property type="evidence" value="ECO:0007669"/>
    <property type="project" value="UniProtKB-KW"/>
</dbReference>
<dbReference type="GO" id="GO:0009740">
    <property type="term" value="P:gibberellic acid mediated signaling pathway"/>
    <property type="evidence" value="ECO:0007669"/>
    <property type="project" value="UniProtKB-KW"/>
</dbReference>
<dbReference type="GO" id="GO:0009788">
    <property type="term" value="P:negative regulation of abscisic acid-activated signaling pathway"/>
    <property type="evidence" value="ECO:0007669"/>
    <property type="project" value="EnsemblPlants"/>
</dbReference>
<dbReference type="GO" id="GO:0009938">
    <property type="term" value="P:negative regulation of gibberellic acid mediated signaling pathway"/>
    <property type="evidence" value="ECO:0007669"/>
    <property type="project" value="EnsemblPlants"/>
</dbReference>
<dbReference type="GO" id="GO:0045893">
    <property type="term" value="P:positive regulation of DNA-templated transcription"/>
    <property type="evidence" value="ECO:0007669"/>
    <property type="project" value="EnsemblPlants"/>
</dbReference>
<dbReference type="GO" id="GO:0009737">
    <property type="term" value="P:response to abscisic acid"/>
    <property type="evidence" value="ECO:0000270"/>
    <property type="project" value="UniProtKB"/>
</dbReference>
<dbReference type="GO" id="GO:0009753">
    <property type="term" value="P:response to jasmonic acid"/>
    <property type="evidence" value="ECO:0000270"/>
    <property type="project" value="UniProtKB"/>
</dbReference>
<dbReference type="FunFam" id="2.20.25.80:FF:000006">
    <property type="entry name" value="WRKY transcription factor"/>
    <property type="match status" value="1"/>
</dbReference>
<dbReference type="FunFam" id="2.20.25.80:FF:000001">
    <property type="entry name" value="WRKY transcription factor 33"/>
    <property type="match status" value="1"/>
</dbReference>
<dbReference type="Gene3D" id="2.20.25.80">
    <property type="entry name" value="WRKY domain"/>
    <property type="match status" value="2"/>
</dbReference>
<dbReference type="InterPro" id="IPR003657">
    <property type="entry name" value="WRKY_dom"/>
</dbReference>
<dbReference type="InterPro" id="IPR036576">
    <property type="entry name" value="WRKY_dom_sf"/>
</dbReference>
<dbReference type="InterPro" id="IPR044810">
    <property type="entry name" value="WRKY_plant"/>
</dbReference>
<dbReference type="PANTHER" id="PTHR31221:SF1">
    <property type="entry name" value="WRKY TRANSCRIPTION FACTOR 33-RELATED"/>
    <property type="match status" value="1"/>
</dbReference>
<dbReference type="PANTHER" id="PTHR31221">
    <property type="entry name" value="WRKY TRANSCRIPTION FACTOR PROTEIN 1-RELATED"/>
    <property type="match status" value="1"/>
</dbReference>
<dbReference type="Pfam" id="PF03106">
    <property type="entry name" value="WRKY"/>
    <property type="match status" value="2"/>
</dbReference>
<dbReference type="SMART" id="SM00774">
    <property type="entry name" value="WRKY"/>
    <property type="match status" value="2"/>
</dbReference>
<dbReference type="SUPFAM" id="SSF118290">
    <property type="entry name" value="WRKY DNA-binding domain"/>
    <property type="match status" value="2"/>
</dbReference>
<dbReference type="PROSITE" id="PS50811">
    <property type="entry name" value="WRKY"/>
    <property type="match status" value="2"/>
</dbReference>
<name>WRK24_ORYSI</name>
<organism>
    <name type="scientific">Oryza sativa subsp. indica</name>
    <name type="common">Rice</name>
    <dbReference type="NCBI Taxonomy" id="39946"/>
    <lineage>
        <taxon>Eukaryota</taxon>
        <taxon>Viridiplantae</taxon>
        <taxon>Streptophyta</taxon>
        <taxon>Embryophyta</taxon>
        <taxon>Tracheophyta</taxon>
        <taxon>Spermatophyta</taxon>
        <taxon>Magnoliopsida</taxon>
        <taxon>Liliopsida</taxon>
        <taxon>Poales</taxon>
        <taxon>Poaceae</taxon>
        <taxon>BOP clade</taxon>
        <taxon>Oryzoideae</taxon>
        <taxon>Oryzeae</taxon>
        <taxon>Oryzinae</taxon>
        <taxon>Oryza</taxon>
        <taxon>Oryza sativa</taxon>
    </lineage>
</organism>
<accession>Q6B6R4</accession>